<sequence>MDWGTLHTFVGGVNKHSTSIGKVWVTVLFVFRVMILVVAAQEVWGDEQEDFVCNTLQPGCRNVCYDHFFPVSHIRLWALQLIFVSTPALLVAMHVAYYRHEAARRFRRGETRSEFKDLEDIKRQKVRIEGSLWWTYTSSIFFRIVFEAAFMYVFYFLYNGYHLPWVLKCGIQPCPNLVDCFISRPTEKTVFTIFMISASVICMLLNVAELCYLLLKVCFRRSKRAQTQKAPPNHALKESKQNEMNELISEGGQNAITGFPS</sequence>
<dbReference type="EMBL" id="BT020774">
    <property type="protein sequence ID" value="AAX08791.1"/>
    <property type="molecule type" value="mRNA"/>
</dbReference>
<dbReference type="EMBL" id="BC123433">
    <property type="protein sequence ID" value="AAI23434.1"/>
    <property type="molecule type" value="mRNA"/>
</dbReference>
<dbReference type="RefSeq" id="NP_001015546.1">
    <property type="nucleotide sequence ID" value="NM_001015546.1"/>
</dbReference>
<dbReference type="RefSeq" id="NP_001153649.1">
    <property type="nucleotide sequence ID" value="NM_001160177.1"/>
</dbReference>
<dbReference type="RefSeq" id="XP_005213824.1">
    <property type="nucleotide sequence ID" value="XM_005213767.5"/>
</dbReference>
<dbReference type="RefSeq" id="XP_005213825.1">
    <property type="nucleotide sequence ID" value="XM_005213768.5"/>
</dbReference>
<dbReference type="RefSeq" id="XP_005213826.1">
    <property type="nucleotide sequence ID" value="XM_005213769.5"/>
</dbReference>
<dbReference type="SMR" id="Q5E9Z5"/>
<dbReference type="FunCoup" id="Q5E9Z5">
    <property type="interactions" value="155"/>
</dbReference>
<dbReference type="STRING" id="9913.ENSBTAP00000052852"/>
<dbReference type="PaxDb" id="9913-ENSBTAP00000052852"/>
<dbReference type="Ensembl" id="ENSBTAT00000052057.3">
    <property type="protein sequence ID" value="ENSBTAP00000052852.1"/>
    <property type="gene ID" value="ENSBTAG00000038662.3"/>
</dbReference>
<dbReference type="Ensembl" id="ENSBTAT00000110243.1">
    <property type="protein sequence ID" value="ENSBTAP00000082745.1"/>
    <property type="gene ID" value="ENSBTAG00000038662.3"/>
</dbReference>
<dbReference type="GeneID" id="508454"/>
<dbReference type="KEGG" id="bta:508454"/>
<dbReference type="CTD" id="10804"/>
<dbReference type="VEuPathDB" id="HostDB:ENSBTAG00000038662"/>
<dbReference type="VGNC" id="VGNC:29381">
    <property type="gene designation" value="GJB6"/>
</dbReference>
<dbReference type="eggNOG" id="ENOG502QWM8">
    <property type="taxonomic scope" value="Eukaryota"/>
</dbReference>
<dbReference type="GeneTree" id="ENSGT01030000234513"/>
<dbReference type="HOGENOM" id="CLU_037388_4_1_1"/>
<dbReference type="InParanoid" id="Q5E9Z5"/>
<dbReference type="OMA" id="PNHAIKE"/>
<dbReference type="OrthoDB" id="8934037at2759"/>
<dbReference type="TreeFam" id="TF329606"/>
<dbReference type="Reactome" id="R-BTA-190861">
    <property type="pathway name" value="Gap junction assembly"/>
</dbReference>
<dbReference type="Proteomes" id="UP000009136">
    <property type="component" value="Chromosome 12"/>
</dbReference>
<dbReference type="Bgee" id="ENSBTAG00000038662">
    <property type="expression patterns" value="Expressed in surface of tongue and 73 other cell types or tissues"/>
</dbReference>
<dbReference type="GO" id="GO:0005884">
    <property type="term" value="C:actin filament"/>
    <property type="evidence" value="ECO:0007669"/>
    <property type="project" value="Ensembl"/>
</dbReference>
<dbReference type="GO" id="GO:0005922">
    <property type="term" value="C:connexin complex"/>
    <property type="evidence" value="ECO:0000318"/>
    <property type="project" value="GO_Central"/>
</dbReference>
<dbReference type="GO" id="GO:0051015">
    <property type="term" value="F:actin filament binding"/>
    <property type="evidence" value="ECO:0007669"/>
    <property type="project" value="Ensembl"/>
</dbReference>
<dbReference type="GO" id="GO:0048487">
    <property type="term" value="F:beta-tubulin binding"/>
    <property type="evidence" value="ECO:0007669"/>
    <property type="project" value="Ensembl"/>
</dbReference>
<dbReference type="GO" id="GO:0005243">
    <property type="term" value="F:gap junction channel activity"/>
    <property type="evidence" value="ECO:0000318"/>
    <property type="project" value="GO_Central"/>
</dbReference>
<dbReference type="GO" id="GO:1903763">
    <property type="term" value="F:gap junction channel activity involved in cell communication by electrical coupling"/>
    <property type="evidence" value="ECO:0007669"/>
    <property type="project" value="Ensembl"/>
</dbReference>
<dbReference type="GO" id="GO:0008017">
    <property type="term" value="F:microtubule binding"/>
    <property type="evidence" value="ECO:0007669"/>
    <property type="project" value="Ensembl"/>
</dbReference>
<dbReference type="GO" id="GO:0007267">
    <property type="term" value="P:cell-cell signaling"/>
    <property type="evidence" value="ECO:0000318"/>
    <property type="project" value="GO_Central"/>
</dbReference>
<dbReference type="GO" id="GO:0042471">
    <property type="term" value="P:ear morphogenesis"/>
    <property type="evidence" value="ECO:0007669"/>
    <property type="project" value="Ensembl"/>
</dbReference>
<dbReference type="GO" id="GO:0016264">
    <property type="term" value="P:gap junction assembly"/>
    <property type="evidence" value="ECO:0007669"/>
    <property type="project" value="Ensembl"/>
</dbReference>
<dbReference type="GO" id="GO:1990349">
    <property type="term" value="P:gap junction-mediated intercellular transport"/>
    <property type="evidence" value="ECO:0000318"/>
    <property type="project" value="GO_Central"/>
</dbReference>
<dbReference type="GO" id="GO:0007605">
    <property type="term" value="P:sensory perception of sound"/>
    <property type="evidence" value="ECO:0007669"/>
    <property type="project" value="UniProtKB-KW"/>
</dbReference>
<dbReference type="FunFam" id="1.20.1440.80:FF:000001">
    <property type="entry name" value="Gap junction alpha-1"/>
    <property type="match status" value="1"/>
</dbReference>
<dbReference type="Gene3D" id="1.20.1440.80">
    <property type="entry name" value="Gap junction channel protein cysteine-rich domain"/>
    <property type="match status" value="1"/>
</dbReference>
<dbReference type="InterPro" id="IPR000500">
    <property type="entry name" value="Connexin"/>
</dbReference>
<dbReference type="InterPro" id="IPR019570">
    <property type="entry name" value="Connexin_CCC"/>
</dbReference>
<dbReference type="InterPro" id="IPR017990">
    <property type="entry name" value="Connexin_CS"/>
</dbReference>
<dbReference type="InterPro" id="IPR013092">
    <property type="entry name" value="Connexin_N"/>
</dbReference>
<dbReference type="InterPro" id="IPR038359">
    <property type="entry name" value="Connexin_N_sf"/>
</dbReference>
<dbReference type="PANTHER" id="PTHR11984">
    <property type="entry name" value="CONNEXIN"/>
    <property type="match status" value="1"/>
</dbReference>
<dbReference type="PANTHER" id="PTHR11984:SF23">
    <property type="entry name" value="GAP JUNCTION BETA-6 PROTEIN"/>
    <property type="match status" value="1"/>
</dbReference>
<dbReference type="Pfam" id="PF00029">
    <property type="entry name" value="Connexin"/>
    <property type="match status" value="1"/>
</dbReference>
<dbReference type="PRINTS" id="PR00206">
    <property type="entry name" value="CONNEXIN"/>
</dbReference>
<dbReference type="SMART" id="SM00037">
    <property type="entry name" value="CNX"/>
    <property type="match status" value="1"/>
</dbReference>
<dbReference type="SMART" id="SM01089">
    <property type="entry name" value="Connexin_CCC"/>
    <property type="match status" value="1"/>
</dbReference>
<dbReference type="PROSITE" id="PS00407">
    <property type="entry name" value="CONNEXINS_1"/>
    <property type="match status" value="1"/>
</dbReference>
<dbReference type="PROSITE" id="PS00408">
    <property type="entry name" value="CONNEXINS_2"/>
    <property type="match status" value="1"/>
</dbReference>
<feature type="chain" id="PRO_0000244878" description="Gap junction beta-6 protein">
    <location>
        <begin position="1"/>
        <end position="261"/>
    </location>
</feature>
<feature type="topological domain" description="Cytoplasmic" evidence="2">
    <location>
        <begin position="1"/>
        <end position="22"/>
    </location>
</feature>
<feature type="transmembrane region" description="Helical" evidence="2">
    <location>
        <begin position="23"/>
        <end position="45"/>
    </location>
</feature>
<feature type="topological domain" description="Extracellular" evidence="2">
    <location>
        <begin position="46"/>
        <end position="75"/>
    </location>
</feature>
<feature type="transmembrane region" description="Helical" evidence="2">
    <location>
        <begin position="76"/>
        <end position="98"/>
    </location>
</feature>
<feature type="topological domain" description="Cytoplasmic" evidence="2">
    <location>
        <begin position="99"/>
        <end position="131"/>
    </location>
</feature>
<feature type="transmembrane region" description="Helical" evidence="2">
    <location>
        <begin position="132"/>
        <end position="154"/>
    </location>
</feature>
<feature type="topological domain" description="Extracellular" evidence="2">
    <location>
        <begin position="155"/>
        <end position="192"/>
    </location>
</feature>
<feature type="transmembrane region" description="Helical" evidence="2">
    <location>
        <begin position="193"/>
        <end position="215"/>
    </location>
</feature>
<feature type="topological domain" description="Cytoplasmic" evidence="2">
    <location>
        <begin position="216"/>
        <end position="261"/>
    </location>
</feature>
<gene>
    <name type="primary">GJB6</name>
</gene>
<accession>Q5E9Z5</accession>
<accession>Q08E41</accession>
<keyword id="KW-0965">Cell junction</keyword>
<keyword id="KW-1003">Cell membrane</keyword>
<keyword id="KW-0303">Gap junction</keyword>
<keyword id="KW-1009">Hearing</keyword>
<keyword id="KW-0472">Membrane</keyword>
<keyword id="KW-1185">Reference proteome</keyword>
<keyword id="KW-0812">Transmembrane</keyword>
<keyword id="KW-1133">Transmembrane helix</keyword>
<name>CXB6_BOVIN</name>
<proteinExistence type="evidence at transcript level"/>
<reference key="1">
    <citation type="journal article" date="2005" name="BMC Genomics">
        <title>Characterization of 954 bovine full-CDS cDNA sequences.</title>
        <authorList>
            <person name="Harhay G.P."/>
            <person name="Sonstegard T.S."/>
            <person name="Keele J.W."/>
            <person name="Heaton M.P."/>
            <person name="Clawson M.L."/>
            <person name="Snelling W.M."/>
            <person name="Wiedmann R.T."/>
            <person name="Van Tassell C.P."/>
            <person name="Smith T.P.L."/>
        </authorList>
    </citation>
    <scope>NUCLEOTIDE SEQUENCE [LARGE SCALE MRNA]</scope>
</reference>
<reference key="2">
    <citation type="submission" date="2006-09" db="EMBL/GenBank/DDBJ databases">
        <authorList>
            <consortium name="NIH - Mammalian Gene Collection (MGC) project"/>
        </authorList>
    </citation>
    <scope>NUCLEOTIDE SEQUENCE [LARGE SCALE MRNA]</scope>
    <source>
        <strain>Hereford</strain>
        <tissue>Thalamus</tissue>
    </source>
</reference>
<protein>
    <recommendedName>
        <fullName>Gap junction beta-6 protein</fullName>
    </recommendedName>
</protein>
<organism>
    <name type="scientific">Bos taurus</name>
    <name type="common">Bovine</name>
    <dbReference type="NCBI Taxonomy" id="9913"/>
    <lineage>
        <taxon>Eukaryota</taxon>
        <taxon>Metazoa</taxon>
        <taxon>Chordata</taxon>
        <taxon>Craniata</taxon>
        <taxon>Vertebrata</taxon>
        <taxon>Euteleostomi</taxon>
        <taxon>Mammalia</taxon>
        <taxon>Eutheria</taxon>
        <taxon>Laurasiatheria</taxon>
        <taxon>Artiodactyla</taxon>
        <taxon>Ruminantia</taxon>
        <taxon>Pecora</taxon>
        <taxon>Bovidae</taxon>
        <taxon>Bovinae</taxon>
        <taxon>Bos</taxon>
    </lineage>
</organism>
<evidence type="ECO:0000250" key="1"/>
<evidence type="ECO:0000255" key="2"/>
<evidence type="ECO:0000305" key="3"/>
<comment type="function">
    <text evidence="1">One gap junction consists of a cluster of closely packed pairs of transmembrane channels, the connexons, through which materials of low MW diffuse from one cell to a neighboring cell.</text>
</comment>
<comment type="subunit">
    <text evidence="1">A connexon is composed of a hexamer of connexins. Interacts with CNST (By similarity).</text>
</comment>
<comment type="subcellular location">
    <subcellularLocation>
        <location evidence="1">Cell membrane</location>
        <topology evidence="1">Multi-pass membrane protein</topology>
    </subcellularLocation>
    <subcellularLocation>
        <location evidence="1">Cell junction</location>
        <location evidence="1">Gap junction</location>
    </subcellularLocation>
</comment>
<comment type="similarity">
    <text evidence="3">Belongs to the connexin family. Beta-type (group I) subfamily.</text>
</comment>